<keyword id="KW-0210">Decarboxylase</keyword>
<keyword id="KW-0456">Lyase</keyword>
<keyword id="KW-0665">Pyrimidine biosynthesis</keyword>
<reference key="1">
    <citation type="journal article" date="2004" name="Nat. Genet.">
        <title>Evidence in the Legionella pneumophila genome for exploitation of host cell functions and high genome plasticity.</title>
        <authorList>
            <person name="Cazalet C."/>
            <person name="Rusniok C."/>
            <person name="Brueggemann H."/>
            <person name="Zidane N."/>
            <person name="Magnier A."/>
            <person name="Ma L."/>
            <person name="Tichit M."/>
            <person name="Jarraud S."/>
            <person name="Bouchier C."/>
            <person name="Vandenesch F."/>
            <person name="Kunst F."/>
            <person name="Etienne J."/>
            <person name="Glaser P."/>
            <person name="Buchrieser C."/>
        </authorList>
    </citation>
    <scope>NUCLEOTIDE SEQUENCE [LARGE SCALE GENOMIC DNA]</scope>
    <source>
        <strain>Lens</strain>
    </source>
</reference>
<evidence type="ECO:0000255" key="1">
    <source>
        <dbReference type="HAMAP-Rule" id="MF_01200"/>
    </source>
</evidence>
<feature type="chain" id="PRO_0000241871" description="Orotidine 5'-phosphate decarboxylase">
    <location>
        <begin position="1"/>
        <end position="229"/>
    </location>
</feature>
<feature type="active site" description="Proton donor" evidence="1">
    <location>
        <position position="61"/>
    </location>
</feature>
<feature type="binding site" evidence="1">
    <location>
        <position position="10"/>
    </location>
    <ligand>
        <name>substrate</name>
    </ligand>
</feature>
<feature type="binding site" evidence="1">
    <location>
        <position position="32"/>
    </location>
    <ligand>
        <name>substrate</name>
    </ligand>
</feature>
<feature type="binding site" evidence="1">
    <location>
        <begin position="59"/>
        <end position="68"/>
    </location>
    <ligand>
        <name>substrate</name>
    </ligand>
</feature>
<feature type="binding site" evidence="1">
    <location>
        <position position="119"/>
    </location>
    <ligand>
        <name>substrate</name>
    </ligand>
</feature>
<feature type="binding site" evidence="1">
    <location>
        <position position="180"/>
    </location>
    <ligand>
        <name>substrate</name>
    </ligand>
</feature>
<feature type="binding site" evidence="1">
    <location>
        <position position="189"/>
    </location>
    <ligand>
        <name>substrate</name>
    </ligand>
</feature>
<feature type="binding site" evidence="1">
    <location>
        <position position="209"/>
    </location>
    <ligand>
        <name>substrate</name>
    </ligand>
</feature>
<feature type="binding site" evidence="1">
    <location>
        <position position="210"/>
    </location>
    <ligand>
        <name>substrate</name>
    </ligand>
</feature>
<accession>Q5WWS3</accession>
<organism>
    <name type="scientific">Legionella pneumophila (strain Lens)</name>
    <dbReference type="NCBI Taxonomy" id="297245"/>
    <lineage>
        <taxon>Bacteria</taxon>
        <taxon>Pseudomonadati</taxon>
        <taxon>Pseudomonadota</taxon>
        <taxon>Gammaproteobacteria</taxon>
        <taxon>Legionellales</taxon>
        <taxon>Legionellaceae</taxon>
        <taxon>Legionella</taxon>
    </lineage>
</organism>
<sequence>MTPKLIVALDFDNQDNALQLVEKLDPNHCALKVGSELFTLLGPQFVKELVRREFKVFLDLKFHDIPNTVAKACYSAAELGVWMINVHAIGGLKMLQAARESLKTYGKDRPLLIAVTVLTSFEEGELASVGIRNTLPEQATHLAMLAREAGLDGVVSSAHEVKIIKQKCGENFITVTPGIRLPNNLKDDQSRVMTPQQAIREGSDFLVIGRPITQASNPYEVVSALLRDL</sequence>
<gene>
    <name evidence="1" type="primary">pyrF</name>
    <name type="ordered locus">lpl1376</name>
</gene>
<comment type="function">
    <text evidence="1">Catalyzes the decarboxylation of orotidine 5'-monophosphate (OMP) to uridine 5'-monophosphate (UMP).</text>
</comment>
<comment type="catalytic activity">
    <reaction evidence="1">
        <text>orotidine 5'-phosphate + H(+) = UMP + CO2</text>
        <dbReference type="Rhea" id="RHEA:11596"/>
        <dbReference type="ChEBI" id="CHEBI:15378"/>
        <dbReference type="ChEBI" id="CHEBI:16526"/>
        <dbReference type="ChEBI" id="CHEBI:57538"/>
        <dbReference type="ChEBI" id="CHEBI:57865"/>
        <dbReference type="EC" id="4.1.1.23"/>
    </reaction>
</comment>
<comment type="pathway">
    <text evidence="1">Pyrimidine metabolism; UMP biosynthesis via de novo pathway; UMP from orotate: step 2/2.</text>
</comment>
<comment type="subunit">
    <text evidence="1">Homodimer.</text>
</comment>
<comment type="similarity">
    <text evidence="1">Belongs to the OMP decarboxylase family. Type 1 subfamily.</text>
</comment>
<name>PYRF_LEGPL</name>
<dbReference type="EC" id="4.1.1.23" evidence="1"/>
<dbReference type="EMBL" id="CR628337">
    <property type="protein sequence ID" value="CAH15616.1"/>
    <property type="molecule type" value="Genomic_DNA"/>
</dbReference>
<dbReference type="RefSeq" id="WP_011215438.1">
    <property type="nucleotide sequence ID" value="NC_006369.1"/>
</dbReference>
<dbReference type="SMR" id="Q5WWS3"/>
<dbReference type="KEGG" id="lpf:lpl1376"/>
<dbReference type="LegioList" id="lpl1376"/>
<dbReference type="HOGENOM" id="CLU_067069_0_0_6"/>
<dbReference type="UniPathway" id="UPA00070">
    <property type="reaction ID" value="UER00120"/>
</dbReference>
<dbReference type="Proteomes" id="UP000002517">
    <property type="component" value="Chromosome"/>
</dbReference>
<dbReference type="GO" id="GO:0005829">
    <property type="term" value="C:cytosol"/>
    <property type="evidence" value="ECO:0007669"/>
    <property type="project" value="TreeGrafter"/>
</dbReference>
<dbReference type="GO" id="GO:0004590">
    <property type="term" value="F:orotidine-5'-phosphate decarboxylase activity"/>
    <property type="evidence" value="ECO:0007669"/>
    <property type="project" value="UniProtKB-UniRule"/>
</dbReference>
<dbReference type="GO" id="GO:0006207">
    <property type="term" value="P:'de novo' pyrimidine nucleobase biosynthetic process"/>
    <property type="evidence" value="ECO:0007669"/>
    <property type="project" value="InterPro"/>
</dbReference>
<dbReference type="GO" id="GO:0044205">
    <property type="term" value="P:'de novo' UMP biosynthetic process"/>
    <property type="evidence" value="ECO:0007669"/>
    <property type="project" value="UniProtKB-UniRule"/>
</dbReference>
<dbReference type="CDD" id="cd04725">
    <property type="entry name" value="OMP_decarboxylase_like"/>
    <property type="match status" value="1"/>
</dbReference>
<dbReference type="FunFam" id="3.20.20.70:FF:000015">
    <property type="entry name" value="Orotidine 5'-phosphate decarboxylase"/>
    <property type="match status" value="1"/>
</dbReference>
<dbReference type="Gene3D" id="3.20.20.70">
    <property type="entry name" value="Aldolase class I"/>
    <property type="match status" value="1"/>
</dbReference>
<dbReference type="HAMAP" id="MF_01200_B">
    <property type="entry name" value="OMPdecase_type1_B"/>
    <property type="match status" value="1"/>
</dbReference>
<dbReference type="InterPro" id="IPR013785">
    <property type="entry name" value="Aldolase_TIM"/>
</dbReference>
<dbReference type="InterPro" id="IPR014732">
    <property type="entry name" value="OMPdecase"/>
</dbReference>
<dbReference type="InterPro" id="IPR018089">
    <property type="entry name" value="OMPdecase_AS"/>
</dbReference>
<dbReference type="InterPro" id="IPR047596">
    <property type="entry name" value="OMPdecase_bac"/>
</dbReference>
<dbReference type="InterPro" id="IPR001754">
    <property type="entry name" value="OMPdeCOase_dom"/>
</dbReference>
<dbReference type="InterPro" id="IPR011060">
    <property type="entry name" value="RibuloseP-bd_barrel"/>
</dbReference>
<dbReference type="NCBIfam" id="NF001273">
    <property type="entry name" value="PRK00230.1"/>
    <property type="match status" value="1"/>
</dbReference>
<dbReference type="NCBIfam" id="TIGR01740">
    <property type="entry name" value="pyrF"/>
    <property type="match status" value="1"/>
</dbReference>
<dbReference type="PANTHER" id="PTHR32119">
    <property type="entry name" value="OROTIDINE 5'-PHOSPHATE DECARBOXYLASE"/>
    <property type="match status" value="1"/>
</dbReference>
<dbReference type="PANTHER" id="PTHR32119:SF2">
    <property type="entry name" value="OROTIDINE 5'-PHOSPHATE DECARBOXYLASE"/>
    <property type="match status" value="1"/>
</dbReference>
<dbReference type="Pfam" id="PF00215">
    <property type="entry name" value="OMPdecase"/>
    <property type="match status" value="1"/>
</dbReference>
<dbReference type="SMART" id="SM00934">
    <property type="entry name" value="OMPdecase"/>
    <property type="match status" value="1"/>
</dbReference>
<dbReference type="SUPFAM" id="SSF51366">
    <property type="entry name" value="Ribulose-phoshate binding barrel"/>
    <property type="match status" value="1"/>
</dbReference>
<dbReference type="PROSITE" id="PS00156">
    <property type="entry name" value="OMPDECASE"/>
    <property type="match status" value="1"/>
</dbReference>
<proteinExistence type="inferred from homology"/>
<protein>
    <recommendedName>
        <fullName evidence="1">Orotidine 5'-phosphate decarboxylase</fullName>
        <ecNumber evidence="1">4.1.1.23</ecNumber>
    </recommendedName>
    <alternativeName>
        <fullName evidence="1">OMP decarboxylase</fullName>
        <shortName evidence="1">OMPDCase</shortName>
        <shortName evidence="1">OMPdecase</shortName>
    </alternativeName>
</protein>